<organism>
    <name type="scientific">Pseudomonas paraeruginosa (strain DSM 24068 / PA7)</name>
    <name type="common">Pseudomonas aeruginosa (strain PA7)</name>
    <dbReference type="NCBI Taxonomy" id="381754"/>
    <lineage>
        <taxon>Bacteria</taxon>
        <taxon>Pseudomonadati</taxon>
        <taxon>Pseudomonadota</taxon>
        <taxon>Gammaproteobacteria</taxon>
        <taxon>Pseudomonadales</taxon>
        <taxon>Pseudomonadaceae</taxon>
        <taxon>Pseudomonas</taxon>
        <taxon>Pseudomonas paraeruginosa</taxon>
    </lineage>
</organism>
<comment type="catalytic activity">
    <reaction evidence="1">
        <text>(S)-4-amino-5-oxopentanoate = 5-aminolevulinate</text>
        <dbReference type="Rhea" id="RHEA:14265"/>
        <dbReference type="ChEBI" id="CHEBI:57501"/>
        <dbReference type="ChEBI" id="CHEBI:356416"/>
        <dbReference type="EC" id="5.4.3.8"/>
    </reaction>
</comment>
<comment type="cofactor">
    <cofactor evidence="1">
        <name>pyridoxal 5'-phosphate</name>
        <dbReference type="ChEBI" id="CHEBI:597326"/>
    </cofactor>
</comment>
<comment type="pathway">
    <text evidence="1">Porphyrin-containing compound metabolism; protoporphyrin-IX biosynthesis; 5-aminolevulinate from L-glutamyl-tRNA(Glu): step 2/2.</text>
</comment>
<comment type="subunit">
    <text evidence="1">Homodimer.</text>
</comment>
<comment type="subcellular location">
    <subcellularLocation>
        <location evidence="1">Cytoplasm</location>
    </subcellularLocation>
</comment>
<comment type="similarity">
    <text evidence="1">Belongs to the class-III pyridoxal-phosphate-dependent aminotransferase family. HemL subfamily.</text>
</comment>
<dbReference type="EC" id="5.4.3.8" evidence="1"/>
<dbReference type="EMBL" id="CP000744">
    <property type="protein sequence ID" value="ABR80673.1"/>
    <property type="molecule type" value="Genomic_DNA"/>
</dbReference>
<dbReference type="RefSeq" id="WP_012074441.1">
    <property type="nucleotide sequence ID" value="NC_009656.1"/>
</dbReference>
<dbReference type="SMR" id="A6V0D2"/>
<dbReference type="GeneID" id="77219476"/>
<dbReference type="KEGG" id="pap:PSPA7_1131"/>
<dbReference type="HOGENOM" id="CLU_016922_1_5_6"/>
<dbReference type="UniPathway" id="UPA00251">
    <property type="reaction ID" value="UER00317"/>
</dbReference>
<dbReference type="Proteomes" id="UP000001582">
    <property type="component" value="Chromosome"/>
</dbReference>
<dbReference type="GO" id="GO:0005737">
    <property type="term" value="C:cytoplasm"/>
    <property type="evidence" value="ECO:0007669"/>
    <property type="project" value="UniProtKB-SubCell"/>
</dbReference>
<dbReference type="GO" id="GO:0042286">
    <property type="term" value="F:glutamate-1-semialdehyde 2,1-aminomutase activity"/>
    <property type="evidence" value="ECO:0007669"/>
    <property type="project" value="UniProtKB-UniRule"/>
</dbReference>
<dbReference type="GO" id="GO:0030170">
    <property type="term" value="F:pyridoxal phosphate binding"/>
    <property type="evidence" value="ECO:0007669"/>
    <property type="project" value="InterPro"/>
</dbReference>
<dbReference type="GO" id="GO:0008483">
    <property type="term" value="F:transaminase activity"/>
    <property type="evidence" value="ECO:0007669"/>
    <property type="project" value="InterPro"/>
</dbReference>
<dbReference type="GO" id="GO:0006782">
    <property type="term" value="P:protoporphyrinogen IX biosynthetic process"/>
    <property type="evidence" value="ECO:0007669"/>
    <property type="project" value="UniProtKB-UniRule"/>
</dbReference>
<dbReference type="CDD" id="cd00610">
    <property type="entry name" value="OAT_like"/>
    <property type="match status" value="1"/>
</dbReference>
<dbReference type="FunFam" id="3.40.640.10:FF:000021">
    <property type="entry name" value="Glutamate-1-semialdehyde 2,1-aminomutase"/>
    <property type="match status" value="1"/>
</dbReference>
<dbReference type="Gene3D" id="3.90.1150.10">
    <property type="entry name" value="Aspartate Aminotransferase, domain 1"/>
    <property type="match status" value="1"/>
</dbReference>
<dbReference type="Gene3D" id="3.40.640.10">
    <property type="entry name" value="Type I PLP-dependent aspartate aminotransferase-like (Major domain)"/>
    <property type="match status" value="1"/>
</dbReference>
<dbReference type="HAMAP" id="MF_00375">
    <property type="entry name" value="HemL_aminotrans_3"/>
    <property type="match status" value="1"/>
</dbReference>
<dbReference type="InterPro" id="IPR004639">
    <property type="entry name" value="4pyrrol_synth_GluAld_NH2Trfase"/>
</dbReference>
<dbReference type="InterPro" id="IPR005814">
    <property type="entry name" value="Aminotrans_3"/>
</dbReference>
<dbReference type="InterPro" id="IPR049704">
    <property type="entry name" value="Aminotrans_3_PPA_site"/>
</dbReference>
<dbReference type="InterPro" id="IPR015424">
    <property type="entry name" value="PyrdxlP-dep_Trfase"/>
</dbReference>
<dbReference type="InterPro" id="IPR015421">
    <property type="entry name" value="PyrdxlP-dep_Trfase_major"/>
</dbReference>
<dbReference type="InterPro" id="IPR015422">
    <property type="entry name" value="PyrdxlP-dep_Trfase_small"/>
</dbReference>
<dbReference type="NCBIfam" id="TIGR00713">
    <property type="entry name" value="hemL"/>
    <property type="match status" value="1"/>
</dbReference>
<dbReference type="NCBIfam" id="NF000818">
    <property type="entry name" value="PRK00062.1"/>
    <property type="match status" value="1"/>
</dbReference>
<dbReference type="PANTHER" id="PTHR43713">
    <property type="entry name" value="GLUTAMATE-1-SEMIALDEHYDE 2,1-AMINOMUTASE"/>
    <property type="match status" value="1"/>
</dbReference>
<dbReference type="PANTHER" id="PTHR43713:SF3">
    <property type="entry name" value="GLUTAMATE-1-SEMIALDEHYDE 2,1-AMINOMUTASE 1, CHLOROPLASTIC-RELATED"/>
    <property type="match status" value="1"/>
</dbReference>
<dbReference type="Pfam" id="PF00202">
    <property type="entry name" value="Aminotran_3"/>
    <property type="match status" value="1"/>
</dbReference>
<dbReference type="SUPFAM" id="SSF53383">
    <property type="entry name" value="PLP-dependent transferases"/>
    <property type="match status" value="1"/>
</dbReference>
<dbReference type="PROSITE" id="PS00600">
    <property type="entry name" value="AA_TRANSFER_CLASS_3"/>
    <property type="match status" value="1"/>
</dbReference>
<gene>
    <name evidence="1" type="primary">hemL</name>
    <name type="ordered locus">PSPA7_1131</name>
</gene>
<name>GSA_PSEP7</name>
<accession>A6V0D2</accession>
<protein>
    <recommendedName>
        <fullName evidence="1">Glutamate-1-semialdehyde 2,1-aminomutase</fullName>
        <shortName evidence="1">GSA</shortName>
        <ecNumber evidence="1">5.4.3.8</ecNumber>
    </recommendedName>
    <alternativeName>
        <fullName evidence="1">Glutamate-1-semialdehyde aminotransferase</fullName>
        <shortName evidence="1">GSA-AT</shortName>
    </alternativeName>
</protein>
<evidence type="ECO:0000255" key="1">
    <source>
        <dbReference type="HAMAP-Rule" id="MF_00375"/>
    </source>
</evidence>
<sequence length="427" mass="45443">MSRSETLFSNAQKHIPGGVNSPVRAFKSVGGTPLFFKHAEGAYVLDEDDKRYVDYVGSWGPMILGHSHPDVLDAVRRQLDHGLSYGAPTALEVEMADLVCAMVPSMEMVRMVSSGTEATMSAIRLARGYTGRDSIIKFEGCYHGHSDSLLVKAGSGALTFGVPNSPGVPAAFAKHTLTLPFNDIEAVRETLAEVGTDVACIIVEPVAGNMNCVPPAPGFLEGLREACDEHGVVLIFDEVMTGFRVALGGAQAYYGVTPDLSTFGKIIGGGMPVGAFGGKREIMQQISPLGPVYQAGTLSGNPLAMAAGLTTLRLISRPGFHDELGAYTTRMLEGLQQRADAAGIPFVTTQAGGMFGLYFTDAEAIVTFEDVMTSDVERFKRFFHLMLDGGVYLAPSAFEAGFTSIAHGDRELEITLNAAEKAFAALK</sequence>
<keyword id="KW-0963">Cytoplasm</keyword>
<keyword id="KW-0413">Isomerase</keyword>
<keyword id="KW-0627">Porphyrin biosynthesis</keyword>
<keyword id="KW-0663">Pyridoxal phosphate</keyword>
<feature type="chain" id="PRO_1000059996" description="Glutamate-1-semialdehyde 2,1-aminomutase">
    <location>
        <begin position="1"/>
        <end position="427"/>
    </location>
</feature>
<feature type="modified residue" description="N6-(pyridoxal phosphate)lysine" evidence="1">
    <location>
        <position position="265"/>
    </location>
</feature>
<reference key="1">
    <citation type="submission" date="2007-06" db="EMBL/GenBank/DDBJ databases">
        <authorList>
            <person name="Dodson R.J."/>
            <person name="Harkins D."/>
            <person name="Paulsen I.T."/>
        </authorList>
    </citation>
    <scope>NUCLEOTIDE SEQUENCE [LARGE SCALE GENOMIC DNA]</scope>
    <source>
        <strain>DSM 24068 / PA7</strain>
    </source>
</reference>
<proteinExistence type="inferred from homology"/>